<accession>Q8X485</accession>
<proteinExistence type="inferred from homology"/>
<gene>
    <name evidence="1" type="primary">symE</name>
    <name type="ordered locus">Z5945</name>
    <name type="ordered locus">ECs5305.1</name>
</gene>
<dbReference type="EC" id="3.1.-.-" evidence="1"/>
<dbReference type="EMBL" id="AE005174">
    <property type="protein sequence ID" value="AAG59528.1"/>
    <property type="molecule type" value="Genomic_DNA"/>
</dbReference>
<dbReference type="EMBL" id="BA000007">
    <property type="status" value="NOT_ANNOTATED_CDS"/>
    <property type="molecule type" value="Genomic_DNA"/>
</dbReference>
<dbReference type="PIR" id="D86133">
    <property type="entry name" value="D86133"/>
</dbReference>
<dbReference type="RefSeq" id="WP_000132630.1">
    <property type="nucleotide sequence ID" value="NZ_VOAI01000002.1"/>
</dbReference>
<dbReference type="STRING" id="155864.Z5945"/>
<dbReference type="KEGG" id="ece:Z5945"/>
<dbReference type="PATRIC" id="fig|83334.175.peg.75"/>
<dbReference type="eggNOG" id="ENOG5031VID">
    <property type="taxonomic scope" value="Bacteria"/>
</dbReference>
<dbReference type="OMA" id="MRQHTRT"/>
<dbReference type="Proteomes" id="UP000000558">
    <property type="component" value="Chromosome"/>
</dbReference>
<dbReference type="Proteomes" id="UP000002519">
    <property type="component" value="Chromosome"/>
</dbReference>
<dbReference type="GO" id="GO:0005737">
    <property type="term" value="C:cytoplasm"/>
    <property type="evidence" value="ECO:0007669"/>
    <property type="project" value="UniProtKB-SubCell"/>
</dbReference>
<dbReference type="GO" id="GO:0003677">
    <property type="term" value="F:DNA binding"/>
    <property type="evidence" value="ECO:0007669"/>
    <property type="project" value="UniProtKB-KW"/>
</dbReference>
<dbReference type="GO" id="GO:0003723">
    <property type="term" value="F:RNA binding"/>
    <property type="evidence" value="ECO:0007669"/>
    <property type="project" value="UniProtKB-KW"/>
</dbReference>
<dbReference type="GO" id="GO:0004521">
    <property type="term" value="F:RNA endonuclease activity"/>
    <property type="evidence" value="ECO:0007669"/>
    <property type="project" value="UniProtKB-UniRule"/>
</dbReference>
<dbReference type="GO" id="GO:0016070">
    <property type="term" value="P:RNA metabolic process"/>
    <property type="evidence" value="ECO:0007669"/>
    <property type="project" value="InterPro"/>
</dbReference>
<dbReference type="HAMAP" id="MF_01193">
    <property type="entry name" value="Endoribonucl_SymE"/>
    <property type="match status" value="1"/>
</dbReference>
<dbReference type="InterPro" id="IPR007159">
    <property type="entry name" value="SpoVT-AbrB_dom"/>
</dbReference>
<dbReference type="InterPro" id="IPR014944">
    <property type="entry name" value="Toxin_SymE-like"/>
</dbReference>
<dbReference type="InterPro" id="IPR020883">
    <property type="entry name" value="TypeI_TA_SymE"/>
</dbReference>
<dbReference type="NCBIfam" id="NF010128">
    <property type="entry name" value="PRK13605.1"/>
    <property type="match status" value="1"/>
</dbReference>
<dbReference type="Pfam" id="PF08845">
    <property type="entry name" value="SymE_toxin"/>
    <property type="match status" value="1"/>
</dbReference>
<dbReference type="PROSITE" id="PS51740">
    <property type="entry name" value="SPOVT_ABRB"/>
    <property type="match status" value="1"/>
</dbReference>
<feature type="chain" id="PRO_0000297818" description="Endoribonuclease SymE">
    <location>
        <begin position="1"/>
        <end position="113"/>
    </location>
</feature>
<feature type="domain" description="SpoVT-AbrB" evidence="2">
    <location>
        <begin position="29"/>
        <end position="74"/>
    </location>
</feature>
<sequence>MTDTHSIAQPFEAEVSPANNRQLTVSYASRYPDYSRIPAITLKGQWLEAAGFATGTVVDVKVMEGCIVLTAQPPAAAESELMQSLRQVCKLSARKQRQVQEFIGVIAGKQKVA</sequence>
<keyword id="KW-0963">Cytoplasm</keyword>
<keyword id="KW-0238">DNA-binding</keyword>
<keyword id="KW-0255">Endonuclease</keyword>
<keyword id="KW-0378">Hydrolase</keyword>
<keyword id="KW-0540">Nuclease</keyword>
<keyword id="KW-1185">Reference proteome</keyword>
<keyword id="KW-0694">RNA-binding</keyword>
<comment type="function">
    <text evidence="1">Involved in the degradation and recycling of damaged RNA. It is itself a target for degradation by the ATP-dependent protease Lon.</text>
</comment>
<comment type="subcellular location">
    <subcellularLocation>
        <location evidence="1">Cytoplasm</location>
    </subcellularLocation>
</comment>
<comment type="similarity">
    <text evidence="1">Belongs to the SymE family.</text>
</comment>
<name>SYME_ECO57</name>
<evidence type="ECO:0000255" key="1">
    <source>
        <dbReference type="HAMAP-Rule" id="MF_01193"/>
    </source>
</evidence>
<evidence type="ECO:0000255" key="2">
    <source>
        <dbReference type="PROSITE-ProRule" id="PRU01076"/>
    </source>
</evidence>
<organism>
    <name type="scientific">Escherichia coli O157:H7</name>
    <dbReference type="NCBI Taxonomy" id="83334"/>
    <lineage>
        <taxon>Bacteria</taxon>
        <taxon>Pseudomonadati</taxon>
        <taxon>Pseudomonadota</taxon>
        <taxon>Gammaproteobacteria</taxon>
        <taxon>Enterobacterales</taxon>
        <taxon>Enterobacteriaceae</taxon>
        <taxon>Escherichia</taxon>
    </lineage>
</organism>
<reference key="1">
    <citation type="journal article" date="2001" name="Nature">
        <title>Genome sequence of enterohaemorrhagic Escherichia coli O157:H7.</title>
        <authorList>
            <person name="Perna N.T."/>
            <person name="Plunkett G. III"/>
            <person name="Burland V."/>
            <person name="Mau B."/>
            <person name="Glasner J.D."/>
            <person name="Rose D.J."/>
            <person name="Mayhew G.F."/>
            <person name="Evans P.S."/>
            <person name="Gregor J."/>
            <person name="Kirkpatrick H.A."/>
            <person name="Posfai G."/>
            <person name="Hackett J."/>
            <person name="Klink S."/>
            <person name="Boutin A."/>
            <person name="Shao Y."/>
            <person name="Miller L."/>
            <person name="Grotbeck E.J."/>
            <person name="Davis N.W."/>
            <person name="Lim A."/>
            <person name="Dimalanta E.T."/>
            <person name="Potamousis K."/>
            <person name="Apodaca J."/>
            <person name="Anantharaman T.S."/>
            <person name="Lin J."/>
            <person name="Yen G."/>
            <person name="Schwartz D.C."/>
            <person name="Welch R.A."/>
            <person name="Blattner F.R."/>
        </authorList>
    </citation>
    <scope>NUCLEOTIDE SEQUENCE [LARGE SCALE GENOMIC DNA]</scope>
    <source>
        <strain>O157:H7 / EDL933 / ATCC 700927 / EHEC</strain>
    </source>
</reference>
<reference key="2">
    <citation type="journal article" date="2001" name="DNA Res.">
        <title>Complete genome sequence of enterohemorrhagic Escherichia coli O157:H7 and genomic comparison with a laboratory strain K-12.</title>
        <authorList>
            <person name="Hayashi T."/>
            <person name="Makino K."/>
            <person name="Ohnishi M."/>
            <person name="Kurokawa K."/>
            <person name="Ishii K."/>
            <person name="Yokoyama K."/>
            <person name="Han C.-G."/>
            <person name="Ohtsubo E."/>
            <person name="Nakayama K."/>
            <person name="Murata T."/>
            <person name="Tanaka M."/>
            <person name="Tobe T."/>
            <person name="Iida T."/>
            <person name="Takami H."/>
            <person name="Honda T."/>
            <person name="Sasakawa C."/>
            <person name="Ogasawara N."/>
            <person name="Yasunaga T."/>
            <person name="Kuhara S."/>
            <person name="Shiba T."/>
            <person name="Hattori M."/>
            <person name="Shinagawa H."/>
        </authorList>
    </citation>
    <scope>NUCLEOTIDE SEQUENCE [LARGE SCALE GENOMIC DNA]</scope>
    <source>
        <strain>O157:H7 / Sakai / RIMD 0509952 / EHEC</strain>
    </source>
</reference>
<protein>
    <recommendedName>
        <fullName evidence="1">Endoribonuclease SymE</fullName>
        <ecNumber evidence="1">3.1.-.-</ecNumber>
    </recommendedName>
</protein>